<accession>P57101</accession>
<accession>Q05AX2</accession>
<name>HAND2_XENLA</name>
<feature type="chain" id="PRO_0000127196" description="Heart- and neural crest derivatives-expressed protein 2">
    <location>
        <begin position="1"/>
        <end position="210"/>
    </location>
</feature>
<feature type="domain" description="bHLH" evidence="2">
    <location>
        <begin position="92"/>
        <end position="144"/>
    </location>
</feature>
<feature type="region of interest" description="Disordered" evidence="3">
    <location>
        <begin position="81"/>
        <end position="101"/>
    </location>
</feature>
<feature type="compositionally biased region" description="Basic residues" evidence="3">
    <location>
        <begin position="90"/>
        <end position="101"/>
    </location>
</feature>
<dbReference type="EMBL" id="AF228335">
    <property type="protein sequence ID" value="AAF67131.1"/>
    <property type="molecule type" value="mRNA"/>
</dbReference>
<dbReference type="EMBL" id="AF286645">
    <property type="protein sequence ID" value="AAG22008.1"/>
    <property type="molecule type" value="mRNA"/>
</dbReference>
<dbReference type="EMBL" id="BC123194">
    <property type="protein sequence ID" value="AAI23195.1"/>
    <property type="molecule type" value="mRNA"/>
</dbReference>
<dbReference type="RefSeq" id="NP_001079108.1">
    <property type="nucleotide sequence ID" value="NM_001085639.1"/>
</dbReference>
<dbReference type="SMR" id="P57101"/>
<dbReference type="DNASU" id="373641"/>
<dbReference type="GeneID" id="373641"/>
<dbReference type="KEGG" id="xla:373641"/>
<dbReference type="AGR" id="Xenbase:XB-GENE-865126"/>
<dbReference type="CTD" id="373641"/>
<dbReference type="Xenbase" id="XB-GENE-865126">
    <property type="gene designation" value="hand2.L"/>
</dbReference>
<dbReference type="OMA" id="PDYGMAL"/>
<dbReference type="OrthoDB" id="10055449at2759"/>
<dbReference type="Proteomes" id="UP000186698">
    <property type="component" value="Chromosome 1L"/>
</dbReference>
<dbReference type="Bgee" id="373641">
    <property type="expression patterns" value="Expressed in heart and 11 other cell types or tissues"/>
</dbReference>
<dbReference type="GO" id="GO:0005634">
    <property type="term" value="C:nucleus"/>
    <property type="evidence" value="ECO:0007669"/>
    <property type="project" value="UniProtKB-SubCell"/>
</dbReference>
<dbReference type="GO" id="GO:0000981">
    <property type="term" value="F:DNA-binding transcription factor activity, RNA polymerase II-specific"/>
    <property type="evidence" value="ECO:0000318"/>
    <property type="project" value="GO_Central"/>
</dbReference>
<dbReference type="GO" id="GO:0046983">
    <property type="term" value="F:protein dimerization activity"/>
    <property type="evidence" value="ECO:0007669"/>
    <property type="project" value="InterPro"/>
</dbReference>
<dbReference type="GO" id="GO:0000977">
    <property type="term" value="F:RNA polymerase II transcription regulatory region sequence-specific DNA binding"/>
    <property type="evidence" value="ECO:0000318"/>
    <property type="project" value="GO_Central"/>
</dbReference>
<dbReference type="GO" id="GO:0007507">
    <property type="term" value="P:heart development"/>
    <property type="evidence" value="ECO:0000318"/>
    <property type="project" value="GO_Central"/>
</dbReference>
<dbReference type="GO" id="GO:0006357">
    <property type="term" value="P:regulation of transcription by RNA polymerase II"/>
    <property type="evidence" value="ECO:0000318"/>
    <property type="project" value="GO_Central"/>
</dbReference>
<dbReference type="CDD" id="cd11471">
    <property type="entry name" value="bHLH_TS_HAND2"/>
    <property type="match status" value="1"/>
</dbReference>
<dbReference type="FunFam" id="4.10.280.10:FF:000010">
    <property type="entry name" value="Scleraxis bHLH transcription factor"/>
    <property type="match status" value="1"/>
</dbReference>
<dbReference type="Gene3D" id="4.10.280.10">
    <property type="entry name" value="Helix-loop-helix DNA-binding domain"/>
    <property type="match status" value="1"/>
</dbReference>
<dbReference type="InterPro" id="IPR011598">
    <property type="entry name" value="bHLH_dom"/>
</dbReference>
<dbReference type="InterPro" id="IPR050283">
    <property type="entry name" value="E-box_TF_Regulators"/>
</dbReference>
<dbReference type="InterPro" id="IPR036638">
    <property type="entry name" value="HLH_DNA-bd_sf"/>
</dbReference>
<dbReference type="PANTHER" id="PTHR23349">
    <property type="entry name" value="BASIC HELIX-LOOP-HELIX TRANSCRIPTION FACTOR, TWIST"/>
    <property type="match status" value="1"/>
</dbReference>
<dbReference type="PANTHER" id="PTHR23349:SF41">
    <property type="entry name" value="HEART- AND NEURAL CREST DERIVATIVES-EXPRESSED PROTEIN 2"/>
    <property type="match status" value="1"/>
</dbReference>
<dbReference type="Pfam" id="PF00010">
    <property type="entry name" value="HLH"/>
    <property type="match status" value="1"/>
</dbReference>
<dbReference type="SMART" id="SM00353">
    <property type="entry name" value="HLH"/>
    <property type="match status" value="1"/>
</dbReference>
<dbReference type="SUPFAM" id="SSF47459">
    <property type="entry name" value="HLH, helix-loop-helix DNA-binding domain"/>
    <property type="match status" value="1"/>
</dbReference>
<dbReference type="PROSITE" id="PS50888">
    <property type="entry name" value="BHLH"/>
    <property type="match status" value="1"/>
</dbReference>
<protein>
    <recommendedName>
        <fullName>Heart- and neural crest derivatives-expressed protein 2</fullName>
    </recommendedName>
    <alternativeName>
        <fullName>Deciduum, heart, autonomic nervous system and neural crest derivatives-expressed protein 2</fullName>
        <shortName>dHAND</shortName>
    </alternativeName>
</protein>
<organism>
    <name type="scientific">Xenopus laevis</name>
    <name type="common">African clawed frog</name>
    <dbReference type="NCBI Taxonomy" id="8355"/>
    <lineage>
        <taxon>Eukaryota</taxon>
        <taxon>Metazoa</taxon>
        <taxon>Chordata</taxon>
        <taxon>Craniata</taxon>
        <taxon>Vertebrata</taxon>
        <taxon>Euteleostomi</taxon>
        <taxon>Amphibia</taxon>
        <taxon>Batrachia</taxon>
        <taxon>Anura</taxon>
        <taxon>Pipoidea</taxon>
        <taxon>Pipidae</taxon>
        <taxon>Xenopodinae</taxon>
        <taxon>Xenopus</taxon>
        <taxon>Xenopus</taxon>
    </lineage>
</organism>
<proteinExistence type="evidence at transcript level"/>
<reference key="1">
    <citation type="journal article" date="2000" name="Mech. Dev.">
        <title>Conservation of sequence and expression of Xenopus and zebrafish dHAND during cardiac, branchial arch and lateral mesoderm development.</title>
        <authorList>
            <person name="Angelo S."/>
            <person name="Lohr J."/>
            <person name="Lee K.H."/>
            <person name="Ticho B.S."/>
            <person name="Breitbart R.E."/>
            <person name="Hill S."/>
            <person name="Yost H.J."/>
            <person name="Srivastava D."/>
        </authorList>
    </citation>
    <scope>NUCLEOTIDE SEQUENCE [MRNA]</scope>
    <source>
        <tissue>Embryo</tissue>
    </source>
</reference>
<reference key="2">
    <citation type="journal article" date="2000" name="Dev. Dyn.">
        <title>Xenopus Hand2 expression marks anterior vascular progenitors but not the developing heart.</title>
        <authorList>
            <person name="Smith S.J."/>
            <person name="Kotecha S."/>
            <person name="Towers N."/>
            <person name="Mohun T.J."/>
        </authorList>
    </citation>
    <scope>NUCLEOTIDE SEQUENCE [MRNA]</scope>
</reference>
<reference key="3">
    <citation type="submission" date="2006-09" db="EMBL/GenBank/DDBJ databases">
        <authorList>
            <consortium name="NIH - Xenopus Gene Collection (XGC) project"/>
        </authorList>
    </citation>
    <scope>NUCLEOTIDE SEQUENCE [LARGE SCALE MRNA]</scope>
    <source>
        <tissue>Fat body</tissue>
    </source>
</reference>
<gene>
    <name type="primary">hand2</name>
    <name type="synonym">dhand</name>
</gene>
<keyword id="KW-0217">Developmental protein</keyword>
<keyword id="KW-0238">DNA-binding</keyword>
<keyword id="KW-0539">Nucleus</keyword>
<keyword id="KW-1185">Reference proteome</keyword>
<keyword id="KW-0804">Transcription</keyword>
<keyword id="KW-0805">Transcription regulation</keyword>
<evidence type="ECO:0000250" key="1"/>
<evidence type="ECO:0000255" key="2">
    <source>
        <dbReference type="PROSITE-ProRule" id="PRU00981"/>
    </source>
</evidence>
<evidence type="ECO:0000256" key="3">
    <source>
        <dbReference type="SAM" id="MobiDB-lite"/>
    </source>
</evidence>
<sequence>MSLVGGFPHHPVVHHDGYPFAAAAAAAASRCHEENPYFHGWLISHPEMSPPDYSMAPSYSPEYANGAAGLDHSHYGGVPGSGAGGLMQRPVKRRGTANRKERRRTISINSAFAELRECIPNVPADTKLSKIKTLRLATSYIAYLMDLLAKDDQNGETEAFKAEIKKTDVKEEKRKKELNELLKSTVCSNDKKTKGRTGWPQHVWALELKQ</sequence>
<comment type="function">
    <text evidence="1">Essential for cardiac morphogenesis and for the development of branchial arches. Binds DNA on E-box consensus sequence 5'-CANNTG-3' (By similarity).</text>
</comment>
<comment type="subunit">
    <text>Efficient DNA binding requires dimerization with another bHLH protein.</text>
</comment>
<comment type="subcellular location">
    <subcellularLocation>
        <location evidence="2">Nucleus</location>
    </subcellularLocation>
</comment>
<comment type="tissue specificity">
    <text>Heart, liver and spleen.</text>
</comment>
<comment type="developmental stage">
    <text>At stage 15, faint expression in the antero-ventral mesoderm. By stage 20, after neural tube closure, expressed in the ventro-lateral mesoderm of the mid-embryo with punctate expression in the anterior clusters of subepidermal cells, which may represent migrating neural crest cells. By stage 24 (early tailbud stage), the expression pattern expands to include lateral plate mesoderm in the mid-embryo, symmetrically along the left-right axis, and the heart anlage in the ventral midline. By stages 28-30 (late tailbud stages), the region of expression in the lateral plate mesoderm has expanded into a symmetrical arc of ventral and lateral expression, which fuses in the midline where the straight heart tube has formed. At the same stages, branchial arches present high levels of expression. By stage 33 (beginning of heart looping), expressed in the heart, lateral mesoderm and branchial arches. The expression persists in the looped heart and the branchial arches throughout stage 37. Most abundant in the heart and outflow tract at stage 47 (tadpole stage).</text>
</comment>